<accession>Q9Y2H9</accession>
<accession>O00114</accession>
<accession>Q8N6X0</accession>
<keyword id="KW-0002">3D-structure</keyword>
<keyword id="KW-0067">ATP-binding</keyword>
<keyword id="KW-1003">Cell membrane</keyword>
<keyword id="KW-0966">Cell projection</keyword>
<keyword id="KW-0963">Cytoplasm</keyword>
<keyword id="KW-0206">Cytoskeleton</keyword>
<keyword id="KW-0225">Disease variant</keyword>
<keyword id="KW-0991">Intellectual disability</keyword>
<keyword id="KW-0418">Kinase</keyword>
<keyword id="KW-0460">Magnesium</keyword>
<keyword id="KW-0472">Membrane</keyword>
<keyword id="KW-0479">Metal-binding</keyword>
<keyword id="KW-0547">Nucleotide-binding</keyword>
<keyword id="KW-0597">Phosphoprotein</keyword>
<keyword id="KW-1267">Proteomics identification</keyword>
<keyword id="KW-1185">Reference proteome</keyword>
<keyword id="KW-0723">Serine/threonine-protein kinase</keyword>
<keyword id="KW-0808">Transferase</keyword>
<gene>
    <name evidence="14" type="primary">MAST1</name>
    <name evidence="13" type="synonym">KIAA0973</name>
    <name type="synonym">SAST</name>
</gene>
<protein>
    <recommendedName>
        <fullName>Microtubule-associated serine/threonine-protein kinase 1</fullName>
        <ecNumber>2.7.11.1</ecNumber>
    </recommendedName>
    <alternativeName>
        <fullName>Syntrophin-associated serine/threonine-protein kinase</fullName>
    </alternativeName>
</protein>
<proteinExistence type="evidence at protein level"/>
<evidence type="ECO:0000250" key="1">
    <source>
        <dbReference type="UniProtKB" id="Q810W7"/>
    </source>
</evidence>
<evidence type="ECO:0000250" key="2">
    <source>
        <dbReference type="UniProtKB" id="Q9BXM7"/>
    </source>
</evidence>
<evidence type="ECO:0000250" key="3">
    <source>
        <dbReference type="UniProtKB" id="Q9R1L5"/>
    </source>
</evidence>
<evidence type="ECO:0000255" key="4">
    <source>
        <dbReference type="PROSITE-ProRule" id="PRU00143"/>
    </source>
</evidence>
<evidence type="ECO:0000255" key="5">
    <source>
        <dbReference type="PROSITE-ProRule" id="PRU00159"/>
    </source>
</evidence>
<evidence type="ECO:0000255" key="6">
    <source>
        <dbReference type="PROSITE-ProRule" id="PRU00618"/>
    </source>
</evidence>
<evidence type="ECO:0000255" key="7">
    <source>
        <dbReference type="PROSITE-ProRule" id="PRU10027"/>
    </source>
</evidence>
<evidence type="ECO:0000256" key="8">
    <source>
        <dbReference type="SAM" id="MobiDB-lite"/>
    </source>
</evidence>
<evidence type="ECO:0000269" key="9">
    <source>
    </source>
</evidence>
<evidence type="ECO:0000269" key="10">
    <source>
    </source>
</evidence>
<evidence type="ECO:0000305" key="11"/>
<evidence type="ECO:0000312" key="12">
    <source>
        <dbReference type="EMBL" id="AAB51171.1"/>
    </source>
</evidence>
<evidence type="ECO:0000312" key="13">
    <source>
        <dbReference type="EMBL" id="BAA76817.1"/>
    </source>
</evidence>
<evidence type="ECO:0000312" key="14">
    <source>
        <dbReference type="HGNC" id="HGNC:19034"/>
    </source>
</evidence>
<evidence type="ECO:0007829" key="15">
    <source>
        <dbReference type="PDB" id="2M9X"/>
    </source>
</evidence>
<evidence type="ECO:0007829" key="16">
    <source>
        <dbReference type="PDB" id="3PS4"/>
    </source>
</evidence>
<name>MAST1_HUMAN</name>
<reference evidence="11 13" key="1">
    <citation type="journal article" date="1999" name="DNA Res.">
        <title>Prediction of the coding sequences of unidentified human genes. XIII. The complete sequences of 100 new cDNA clones from brain which code for large proteins in vitro.</title>
        <authorList>
            <person name="Nagase T."/>
            <person name="Ishikawa K."/>
            <person name="Suyama M."/>
            <person name="Kikuno R."/>
            <person name="Hirosawa M."/>
            <person name="Miyajima N."/>
            <person name="Tanaka A."/>
            <person name="Kotani H."/>
            <person name="Nomura N."/>
            <person name="Ohara O."/>
        </authorList>
    </citation>
    <scope>NUCLEOTIDE SEQUENCE [LARGE SCALE MRNA]</scope>
    <source>
        <tissue evidence="13">Brain</tissue>
    </source>
</reference>
<reference evidence="11 12" key="2">
    <citation type="journal article" date="2004" name="Nature">
        <title>The DNA sequence and biology of human chromosome 19.</title>
        <authorList>
            <person name="Grimwood J."/>
            <person name="Gordon L.A."/>
            <person name="Olsen A.S."/>
            <person name="Terry A."/>
            <person name="Schmutz J."/>
            <person name="Lamerdin J.E."/>
            <person name="Hellsten U."/>
            <person name="Goodstein D."/>
            <person name="Couronne O."/>
            <person name="Tran-Gyamfi M."/>
            <person name="Aerts A."/>
            <person name="Altherr M."/>
            <person name="Ashworth L."/>
            <person name="Bajorek E."/>
            <person name="Black S."/>
            <person name="Branscomb E."/>
            <person name="Caenepeel S."/>
            <person name="Carrano A.V."/>
            <person name="Caoile C."/>
            <person name="Chan Y.M."/>
            <person name="Christensen M."/>
            <person name="Cleland C.A."/>
            <person name="Copeland A."/>
            <person name="Dalin E."/>
            <person name="Dehal P."/>
            <person name="Denys M."/>
            <person name="Detter J.C."/>
            <person name="Escobar J."/>
            <person name="Flowers D."/>
            <person name="Fotopulos D."/>
            <person name="Garcia C."/>
            <person name="Georgescu A.M."/>
            <person name="Glavina T."/>
            <person name="Gomez M."/>
            <person name="Gonzales E."/>
            <person name="Groza M."/>
            <person name="Hammon N."/>
            <person name="Hawkins T."/>
            <person name="Haydu L."/>
            <person name="Ho I."/>
            <person name="Huang W."/>
            <person name="Israni S."/>
            <person name="Jett J."/>
            <person name="Kadner K."/>
            <person name="Kimball H."/>
            <person name="Kobayashi A."/>
            <person name="Larionov V."/>
            <person name="Leem S.-H."/>
            <person name="Lopez F."/>
            <person name="Lou Y."/>
            <person name="Lowry S."/>
            <person name="Malfatti S."/>
            <person name="Martinez D."/>
            <person name="McCready P.M."/>
            <person name="Medina C."/>
            <person name="Morgan J."/>
            <person name="Nelson K."/>
            <person name="Nolan M."/>
            <person name="Ovcharenko I."/>
            <person name="Pitluck S."/>
            <person name="Pollard M."/>
            <person name="Popkie A.P."/>
            <person name="Predki P."/>
            <person name="Quan G."/>
            <person name="Ramirez L."/>
            <person name="Rash S."/>
            <person name="Retterer J."/>
            <person name="Rodriguez A."/>
            <person name="Rogers S."/>
            <person name="Salamov A."/>
            <person name="Salazar A."/>
            <person name="She X."/>
            <person name="Smith D."/>
            <person name="Slezak T."/>
            <person name="Solovyev V."/>
            <person name="Thayer N."/>
            <person name="Tice H."/>
            <person name="Tsai M."/>
            <person name="Ustaszewska A."/>
            <person name="Vo N."/>
            <person name="Wagner M."/>
            <person name="Wheeler J."/>
            <person name="Wu K."/>
            <person name="Xie G."/>
            <person name="Yang J."/>
            <person name="Dubchak I."/>
            <person name="Furey T.S."/>
            <person name="DeJong P."/>
            <person name="Dickson M."/>
            <person name="Gordon D."/>
            <person name="Eichler E.E."/>
            <person name="Pennacchio L.A."/>
            <person name="Richardson P."/>
            <person name="Stubbs L."/>
            <person name="Rokhsar D.S."/>
            <person name="Myers R.M."/>
            <person name="Rubin E.M."/>
            <person name="Lucas S.M."/>
        </authorList>
    </citation>
    <scope>NUCLEOTIDE SEQUENCE [LARGE SCALE GENOMIC DNA]</scope>
</reference>
<reference evidence="11" key="3">
    <citation type="journal article" date="2004" name="Genome Res.">
        <title>The status, quality, and expansion of the NIH full-length cDNA project: the Mammalian Gene Collection (MGC).</title>
        <authorList>
            <consortium name="The MGC Project Team"/>
        </authorList>
    </citation>
    <scope>NUCLEOTIDE SEQUENCE [LARGE SCALE MRNA] OF 390-1570</scope>
    <source>
        <tissue>Brain</tissue>
    </source>
</reference>
<reference key="4">
    <citation type="journal article" date="2018" name="Neuron">
        <title>Mutations in MAST1 cause mega-corpus-callosum syndrome with cerebellar hypoplasia and cortical malformations.</title>
        <authorList>
            <person name="Tripathy R."/>
            <person name="Leca I."/>
            <person name="van Dijk T."/>
            <person name="Weiss J."/>
            <person name="van Bon B.W."/>
            <person name="Sergaki M.C."/>
            <person name="Gstrein T."/>
            <person name="Breuss M."/>
            <person name="Tian G."/>
            <person name="Bahi-Buisson N."/>
            <person name="Paciorkowski A.R."/>
            <person name="Pagnamenta A.T."/>
            <person name="Wenninger-Weinzierl A."/>
            <person name="Martinez-Reza M.F."/>
            <person name="Landler L."/>
            <person name="Lise S."/>
            <person name="Taylor J.C."/>
            <person name="Terrone G."/>
            <person name="Vitiello G."/>
            <person name="Del Giudice E."/>
            <person name="Brunetti-Pierri N."/>
            <person name="D'Amico A."/>
            <person name="Reymond A."/>
            <person name="Voisin N."/>
            <person name="Bernstein J.A."/>
            <person name="Farrelly E."/>
            <person name="Kini U."/>
            <person name="Leonard T.A."/>
            <person name="Valence S."/>
            <person name="Burglen L."/>
            <person name="Armstrong L."/>
            <person name="Hiatt S.M."/>
            <person name="Cooper G.M."/>
            <person name="Aldinger K.A."/>
            <person name="Dobyns W.B."/>
            <person name="Mirzaa G."/>
            <person name="Pierson T.M."/>
            <person name="Baas F."/>
            <person name="Chelly J."/>
            <person name="Cowan N.J."/>
            <person name="Keays D.A."/>
        </authorList>
    </citation>
    <scope>FUNCTION</scope>
    <scope>TISSUE SPECIFICITY</scope>
    <scope>INVOLVEMENT IN MCCCHCM</scope>
    <scope>VARIANTS MCCCHCM GLU-195 DEL; LYS-277 DEL; LEU-279 DEL AND SER-517</scope>
    <scope>VARIANTS LEU-93; VAL-98; SER-517; THR-915 AND ARG-1177</scope>
</reference>
<reference key="5">
    <citation type="journal article" date="2007" name="Nature">
        <title>Patterns of somatic mutation in human cancer genomes.</title>
        <authorList>
            <person name="Greenman C."/>
            <person name="Stephens P."/>
            <person name="Smith R."/>
            <person name="Dalgliesh G.L."/>
            <person name="Hunter C."/>
            <person name="Bignell G."/>
            <person name="Davies H."/>
            <person name="Teague J."/>
            <person name="Butler A."/>
            <person name="Stevens C."/>
            <person name="Edkins S."/>
            <person name="O'Meara S."/>
            <person name="Vastrik I."/>
            <person name="Schmidt E.E."/>
            <person name="Avis T."/>
            <person name="Barthorpe S."/>
            <person name="Bhamra G."/>
            <person name="Buck G."/>
            <person name="Choudhury B."/>
            <person name="Clements J."/>
            <person name="Cole J."/>
            <person name="Dicks E."/>
            <person name="Forbes S."/>
            <person name="Gray K."/>
            <person name="Halliday K."/>
            <person name="Harrison R."/>
            <person name="Hills K."/>
            <person name="Hinton J."/>
            <person name="Jenkinson A."/>
            <person name="Jones D."/>
            <person name="Menzies A."/>
            <person name="Mironenko T."/>
            <person name="Perry J."/>
            <person name="Raine K."/>
            <person name="Richardson D."/>
            <person name="Shepherd R."/>
            <person name="Small A."/>
            <person name="Tofts C."/>
            <person name="Varian J."/>
            <person name="Webb T."/>
            <person name="West S."/>
            <person name="Widaa S."/>
            <person name="Yates A."/>
            <person name="Cahill D.P."/>
            <person name="Louis D.N."/>
            <person name="Goldstraw P."/>
            <person name="Nicholson A.G."/>
            <person name="Brasseur F."/>
            <person name="Looijenga L."/>
            <person name="Weber B.L."/>
            <person name="Chiew Y.-E."/>
            <person name="DeFazio A."/>
            <person name="Greaves M.F."/>
            <person name="Green A.R."/>
            <person name="Campbell P."/>
            <person name="Birney E."/>
            <person name="Easton D.F."/>
            <person name="Chenevix-Trench G."/>
            <person name="Tan M.-H."/>
            <person name="Khoo S.K."/>
            <person name="Teh B.T."/>
            <person name="Yuen S.T."/>
            <person name="Leung S.Y."/>
            <person name="Wooster R."/>
            <person name="Futreal P.A."/>
            <person name="Stratton M.R."/>
        </authorList>
    </citation>
    <scope>VARIANTS [LARGE SCALE ANALYSIS] THR-269; TYR-1240 AND SER-1292</scope>
</reference>
<dbReference type="EC" id="2.7.11.1"/>
<dbReference type="EMBL" id="AB023190">
    <property type="protein sequence ID" value="BAA76817.1"/>
    <property type="status" value="ALT_INIT"/>
    <property type="molecule type" value="mRNA"/>
</dbReference>
<dbReference type="EMBL" id="AC020934">
    <property type="status" value="NOT_ANNOTATED_CDS"/>
    <property type="molecule type" value="Genomic_DNA"/>
</dbReference>
<dbReference type="EMBL" id="AD000092">
    <property type="protein sequence ID" value="AAB51171.1"/>
    <property type="status" value="ALT_SEQ"/>
    <property type="molecule type" value="Genomic_DNA"/>
</dbReference>
<dbReference type="EMBL" id="BC027985">
    <property type="protein sequence ID" value="AAH27985.2"/>
    <property type="status" value="ALT_INIT"/>
    <property type="molecule type" value="mRNA"/>
</dbReference>
<dbReference type="CCDS" id="CCDS32921.1"/>
<dbReference type="PIR" id="T45070">
    <property type="entry name" value="T45070"/>
</dbReference>
<dbReference type="RefSeq" id="NP_055790.1">
    <property type="nucleotide sequence ID" value="NM_014975.3"/>
</dbReference>
<dbReference type="PDB" id="2M9X">
    <property type="method" value="NMR"/>
    <property type="chains" value="A=187-287"/>
</dbReference>
<dbReference type="PDB" id="3PS4">
    <property type="method" value="X-ray"/>
    <property type="resolution" value="1.85 A"/>
    <property type="chains" value="A/B/C/D=965-1057"/>
</dbReference>
<dbReference type="PDBsum" id="2M9X"/>
<dbReference type="PDBsum" id="3PS4"/>
<dbReference type="SMR" id="Q9Y2H9"/>
<dbReference type="BioGRID" id="116632">
    <property type="interactions" value="225"/>
</dbReference>
<dbReference type="FunCoup" id="Q9Y2H9">
    <property type="interactions" value="198"/>
</dbReference>
<dbReference type="IntAct" id="Q9Y2H9">
    <property type="interactions" value="211"/>
</dbReference>
<dbReference type="STRING" id="9606.ENSP00000251472"/>
<dbReference type="BindingDB" id="Q9Y2H9"/>
<dbReference type="ChEMBL" id="CHEMBL1163128"/>
<dbReference type="DrugBank" id="DB12010">
    <property type="generic name" value="Fostamatinib"/>
</dbReference>
<dbReference type="DrugCentral" id="Q9Y2H9"/>
<dbReference type="GlyConnect" id="2057">
    <property type="glycosylation" value="4 N-Linked glycans (1 site)"/>
</dbReference>
<dbReference type="GlyCosmos" id="Q9Y2H9">
    <property type="glycosylation" value="2 sites, 9 glycans"/>
</dbReference>
<dbReference type="GlyGen" id="Q9Y2H9">
    <property type="glycosylation" value="3 sites, 8 N-linked glycans (1 site), 1 O-linked glycan (1 site)"/>
</dbReference>
<dbReference type="iPTMnet" id="Q9Y2H9"/>
<dbReference type="PhosphoSitePlus" id="Q9Y2H9"/>
<dbReference type="SwissPalm" id="Q9Y2H9"/>
<dbReference type="BioMuta" id="MAST1"/>
<dbReference type="DMDM" id="60390226"/>
<dbReference type="jPOST" id="Q9Y2H9"/>
<dbReference type="MassIVE" id="Q9Y2H9"/>
<dbReference type="PaxDb" id="9606-ENSP00000251472"/>
<dbReference type="PeptideAtlas" id="Q9Y2H9"/>
<dbReference type="ProteomicsDB" id="85788"/>
<dbReference type="Antibodypedia" id="26218">
    <property type="antibodies" value="93 antibodies from 23 providers"/>
</dbReference>
<dbReference type="DNASU" id="22983"/>
<dbReference type="Ensembl" id="ENST00000251472.9">
    <property type="protein sequence ID" value="ENSP00000251472.3"/>
    <property type="gene ID" value="ENSG00000105613.10"/>
</dbReference>
<dbReference type="GeneID" id="22983"/>
<dbReference type="KEGG" id="hsa:22983"/>
<dbReference type="MANE-Select" id="ENST00000251472.9">
    <property type="protein sequence ID" value="ENSP00000251472.3"/>
    <property type="RefSeq nucleotide sequence ID" value="NM_014975.3"/>
    <property type="RefSeq protein sequence ID" value="NP_055790.1"/>
</dbReference>
<dbReference type="UCSC" id="uc002mvm.4">
    <property type="organism name" value="human"/>
</dbReference>
<dbReference type="AGR" id="HGNC:19034"/>
<dbReference type="CTD" id="22983"/>
<dbReference type="DisGeNET" id="22983"/>
<dbReference type="GeneCards" id="MAST1"/>
<dbReference type="HGNC" id="HGNC:19034">
    <property type="gene designation" value="MAST1"/>
</dbReference>
<dbReference type="HPA" id="ENSG00000105613">
    <property type="expression patterns" value="Tissue enriched (brain)"/>
</dbReference>
<dbReference type="MalaCards" id="MAST1"/>
<dbReference type="MIM" id="612256">
    <property type="type" value="gene"/>
</dbReference>
<dbReference type="MIM" id="618273">
    <property type="type" value="phenotype"/>
</dbReference>
<dbReference type="neXtProt" id="NX_Q9Y2H9"/>
<dbReference type="OpenTargets" id="ENSG00000105613"/>
<dbReference type="PharmGKB" id="PA134946727"/>
<dbReference type="VEuPathDB" id="HostDB:ENSG00000105613"/>
<dbReference type="eggNOG" id="KOG0605">
    <property type="taxonomic scope" value="Eukaryota"/>
</dbReference>
<dbReference type="eggNOG" id="KOG0606">
    <property type="taxonomic scope" value="Eukaryota"/>
</dbReference>
<dbReference type="GeneTree" id="ENSGT00940000157700"/>
<dbReference type="HOGENOM" id="CLU_000288_9_0_1"/>
<dbReference type="InParanoid" id="Q9Y2H9"/>
<dbReference type="OMA" id="TNLYEGF"/>
<dbReference type="OrthoDB" id="10070999at2759"/>
<dbReference type="PAN-GO" id="Q9Y2H9">
    <property type="GO annotations" value="4 GO annotations based on evolutionary models"/>
</dbReference>
<dbReference type="PhylomeDB" id="Q9Y2H9"/>
<dbReference type="TreeFam" id="TF313149"/>
<dbReference type="PathwayCommons" id="Q9Y2H9"/>
<dbReference type="SignaLink" id="Q9Y2H9"/>
<dbReference type="SIGNOR" id="Q9Y2H9"/>
<dbReference type="BioGRID-ORCS" id="22983">
    <property type="hits" value="18 hits in 1184 CRISPR screens"/>
</dbReference>
<dbReference type="ChiTaRS" id="MAST1">
    <property type="organism name" value="human"/>
</dbReference>
<dbReference type="EvolutionaryTrace" id="Q9Y2H9"/>
<dbReference type="GeneWiki" id="MAST1"/>
<dbReference type="GenomeRNAi" id="22983"/>
<dbReference type="Pharos" id="Q9Y2H9">
    <property type="development level" value="Tchem"/>
</dbReference>
<dbReference type="PRO" id="PR:Q9Y2H9"/>
<dbReference type="Proteomes" id="UP000005640">
    <property type="component" value="Chromosome 19"/>
</dbReference>
<dbReference type="RNAct" id="Q9Y2H9">
    <property type="molecule type" value="protein"/>
</dbReference>
<dbReference type="Bgee" id="ENSG00000105613">
    <property type="expression patterns" value="Expressed in right hemisphere of cerebellum and 111 other cell types or tissues"/>
</dbReference>
<dbReference type="ExpressionAtlas" id="Q9Y2H9">
    <property type="expression patterns" value="baseline and differential"/>
</dbReference>
<dbReference type="GO" id="GO:0030424">
    <property type="term" value="C:axon"/>
    <property type="evidence" value="ECO:0007669"/>
    <property type="project" value="UniProtKB-SubCell"/>
</dbReference>
<dbReference type="GO" id="GO:0005737">
    <property type="term" value="C:cytoplasm"/>
    <property type="evidence" value="ECO:0007669"/>
    <property type="project" value="UniProtKB-KW"/>
</dbReference>
<dbReference type="GO" id="GO:0005856">
    <property type="term" value="C:cytoskeleton"/>
    <property type="evidence" value="ECO:0007669"/>
    <property type="project" value="UniProtKB-SubCell"/>
</dbReference>
<dbReference type="GO" id="GO:0030425">
    <property type="term" value="C:dendrite"/>
    <property type="evidence" value="ECO:0007669"/>
    <property type="project" value="UniProtKB-SubCell"/>
</dbReference>
<dbReference type="GO" id="GO:0043005">
    <property type="term" value="C:neuron projection"/>
    <property type="evidence" value="ECO:0000250"/>
    <property type="project" value="UniProtKB"/>
</dbReference>
<dbReference type="GO" id="GO:0043025">
    <property type="term" value="C:neuronal cell body"/>
    <property type="evidence" value="ECO:0000250"/>
    <property type="project" value="UniProtKB"/>
</dbReference>
<dbReference type="GO" id="GO:0005886">
    <property type="term" value="C:plasma membrane"/>
    <property type="evidence" value="ECO:0007669"/>
    <property type="project" value="UniProtKB-SubCell"/>
</dbReference>
<dbReference type="GO" id="GO:0005524">
    <property type="term" value="F:ATP binding"/>
    <property type="evidence" value="ECO:0000250"/>
    <property type="project" value="UniProtKB"/>
</dbReference>
<dbReference type="GO" id="GO:0000287">
    <property type="term" value="F:magnesium ion binding"/>
    <property type="evidence" value="ECO:0000250"/>
    <property type="project" value="UniProtKB"/>
</dbReference>
<dbReference type="GO" id="GO:0008017">
    <property type="term" value="F:microtubule binding"/>
    <property type="evidence" value="ECO:0000250"/>
    <property type="project" value="UniProtKB"/>
</dbReference>
<dbReference type="GO" id="GO:0106310">
    <property type="term" value="F:protein serine kinase activity"/>
    <property type="evidence" value="ECO:0007669"/>
    <property type="project" value="RHEA"/>
</dbReference>
<dbReference type="GO" id="GO:0004674">
    <property type="term" value="F:protein serine/threonine kinase activity"/>
    <property type="evidence" value="ECO:0000250"/>
    <property type="project" value="UniProtKB"/>
</dbReference>
<dbReference type="GO" id="GO:0007420">
    <property type="term" value="P:brain development"/>
    <property type="evidence" value="ECO:0000315"/>
    <property type="project" value="UniProtKB"/>
</dbReference>
<dbReference type="GO" id="GO:0007010">
    <property type="term" value="P:cytoskeleton organization"/>
    <property type="evidence" value="ECO:0000250"/>
    <property type="project" value="UniProtKB"/>
</dbReference>
<dbReference type="GO" id="GO:0035556">
    <property type="term" value="P:intracellular signal transduction"/>
    <property type="evidence" value="ECO:0000250"/>
    <property type="project" value="UniProtKB"/>
</dbReference>
<dbReference type="GO" id="GO:0006468">
    <property type="term" value="P:protein phosphorylation"/>
    <property type="evidence" value="ECO:0000250"/>
    <property type="project" value="UniProtKB"/>
</dbReference>
<dbReference type="CDD" id="cd23073">
    <property type="entry name" value="PDZ_MAST1"/>
    <property type="match status" value="1"/>
</dbReference>
<dbReference type="CDD" id="cd05609">
    <property type="entry name" value="STKc_MAST"/>
    <property type="match status" value="1"/>
</dbReference>
<dbReference type="FunFam" id="3.30.200.20:FF:001045">
    <property type="entry name" value="Microtubule-associated serine/threonine kinase 1a"/>
    <property type="match status" value="1"/>
</dbReference>
<dbReference type="FunFam" id="1.10.510.10:FF:000012">
    <property type="entry name" value="microtubule-associated serine/threonine-protein kinase 2 isoform X1"/>
    <property type="match status" value="1"/>
</dbReference>
<dbReference type="FunFam" id="1.20.1480.20:FF:000001">
    <property type="entry name" value="microtubule-associated serine/threonine-protein kinase 4 isoform X1"/>
    <property type="match status" value="1"/>
</dbReference>
<dbReference type="FunFam" id="2.30.42.10:FF:000008">
    <property type="entry name" value="microtubule-associated serine/threonine-protein kinase 4 isoform X2"/>
    <property type="match status" value="1"/>
</dbReference>
<dbReference type="Gene3D" id="2.30.42.10">
    <property type="match status" value="1"/>
</dbReference>
<dbReference type="Gene3D" id="1.20.1480.20">
    <property type="entry name" value="MAST3 pre-PK domain-like"/>
    <property type="match status" value="1"/>
</dbReference>
<dbReference type="Gene3D" id="3.30.200.20">
    <property type="entry name" value="Phosphorylase Kinase, domain 1"/>
    <property type="match status" value="1"/>
</dbReference>
<dbReference type="Gene3D" id="1.10.510.10">
    <property type="entry name" value="Transferase(Phosphotransferase) domain 1"/>
    <property type="match status" value="1"/>
</dbReference>
<dbReference type="InterPro" id="IPR000961">
    <property type="entry name" value="AGC-kinase_C"/>
</dbReference>
<dbReference type="InterPro" id="IPR011009">
    <property type="entry name" value="Kinase-like_dom_sf"/>
</dbReference>
<dbReference type="InterPro" id="IPR037711">
    <property type="entry name" value="MAST"/>
</dbReference>
<dbReference type="InterPro" id="IPR015022">
    <property type="entry name" value="MAST_pre-PK_dom"/>
</dbReference>
<dbReference type="InterPro" id="IPR023142">
    <property type="entry name" value="MAST_pre-PK_dom_sf"/>
</dbReference>
<dbReference type="InterPro" id="IPR001478">
    <property type="entry name" value="PDZ"/>
</dbReference>
<dbReference type="InterPro" id="IPR041489">
    <property type="entry name" value="PDZ_6"/>
</dbReference>
<dbReference type="InterPro" id="IPR036034">
    <property type="entry name" value="PDZ_sf"/>
</dbReference>
<dbReference type="InterPro" id="IPR000719">
    <property type="entry name" value="Prot_kinase_dom"/>
</dbReference>
<dbReference type="InterPro" id="IPR008271">
    <property type="entry name" value="Ser/Thr_kinase_AS"/>
</dbReference>
<dbReference type="InterPro" id="IPR050236">
    <property type="entry name" value="Ser_Thr_kinase_AGC"/>
</dbReference>
<dbReference type="PANTHER" id="PTHR24356:SF150">
    <property type="entry name" value="MICROTUBULE-ASSOCIATED SERINE_THREONINE-PROTEIN KINASE 1"/>
    <property type="match status" value="1"/>
</dbReference>
<dbReference type="PANTHER" id="PTHR24356">
    <property type="entry name" value="SERINE/THREONINE-PROTEIN KINASE"/>
    <property type="match status" value="1"/>
</dbReference>
<dbReference type="Pfam" id="PF08926">
    <property type="entry name" value="DUF1908"/>
    <property type="match status" value="1"/>
</dbReference>
<dbReference type="Pfam" id="PF17820">
    <property type="entry name" value="PDZ_6"/>
    <property type="match status" value="1"/>
</dbReference>
<dbReference type="Pfam" id="PF00069">
    <property type="entry name" value="Pkinase"/>
    <property type="match status" value="1"/>
</dbReference>
<dbReference type="SMART" id="SM00228">
    <property type="entry name" value="PDZ"/>
    <property type="match status" value="1"/>
</dbReference>
<dbReference type="SMART" id="SM00220">
    <property type="entry name" value="S_TKc"/>
    <property type="match status" value="1"/>
</dbReference>
<dbReference type="SUPFAM" id="SSF140482">
    <property type="entry name" value="MAST3 pre-PK domain-like"/>
    <property type="match status" value="1"/>
</dbReference>
<dbReference type="SUPFAM" id="SSF50156">
    <property type="entry name" value="PDZ domain-like"/>
    <property type="match status" value="1"/>
</dbReference>
<dbReference type="SUPFAM" id="SSF56112">
    <property type="entry name" value="Protein kinase-like (PK-like)"/>
    <property type="match status" value="1"/>
</dbReference>
<dbReference type="PROSITE" id="PS51285">
    <property type="entry name" value="AGC_KINASE_CTER"/>
    <property type="match status" value="1"/>
</dbReference>
<dbReference type="PROSITE" id="PS50106">
    <property type="entry name" value="PDZ"/>
    <property type="match status" value="1"/>
</dbReference>
<dbReference type="PROSITE" id="PS50011">
    <property type="entry name" value="PROTEIN_KINASE_DOM"/>
    <property type="match status" value="1"/>
</dbReference>
<dbReference type="PROSITE" id="PS00108">
    <property type="entry name" value="PROTEIN_KINASE_ST"/>
    <property type="match status" value="1"/>
</dbReference>
<comment type="function">
    <text evidence="3 10">Microtubule-associated protein essential for correct brain development (PubMed:30449657). Appears to link the dystrophin/utrophin network with microtubule filaments via the syntrophins. Phosphorylation of DMD or UTRN may modulate their affinities for associated proteins (By similarity).</text>
</comment>
<comment type="catalytic activity">
    <reaction evidence="2">
        <text>L-seryl-[protein] + ATP = O-phospho-L-seryl-[protein] + ADP + H(+)</text>
        <dbReference type="Rhea" id="RHEA:17989"/>
        <dbReference type="Rhea" id="RHEA-COMP:9863"/>
        <dbReference type="Rhea" id="RHEA-COMP:11604"/>
        <dbReference type="ChEBI" id="CHEBI:15378"/>
        <dbReference type="ChEBI" id="CHEBI:29999"/>
        <dbReference type="ChEBI" id="CHEBI:30616"/>
        <dbReference type="ChEBI" id="CHEBI:83421"/>
        <dbReference type="ChEBI" id="CHEBI:456216"/>
        <dbReference type="EC" id="2.7.11.1"/>
    </reaction>
</comment>
<comment type="catalytic activity">
    <reaction evidence="2">
        <text>L-threonyl-[protein] + ATP = O-phospho-L-threonyl-[protein] + ADP + H(+)</text>
        <dbReference type="Rhea" id="RHEA:46608"/>
        <dbReference type="Rhea" id="RHEA-COMP:11060"/>
        <dbReference type="Rhea" id="RHEA-COMP:11605"/>
        <dbReference type="ChEBI" id="CHEBI:15378"/>
        <dbReference type="ChEBI" id="CHEBI:30013"/>
        <dbReference type="ChEBI" id="CHEBI:30616"/>
        <dbReference type="ChEBI" id="CHEBI:61977"/>
        <dbReference type="ChEBI" id="CHEBI:456216"/>
        <dbReference type="EC" id="2.7.11.1"/>
    </reaction>
</comment>
<comment type="cofactor">
    <cofactor evidence="2">
        <name>Mg(2+)</name>
        <dbReference type="ChEBI" id="CHEBI:18420"/>
    </cofactor>
</comment>
<comment type="subunit">
    <text evidence="3">Interacts with the microtubules. Part of a low affinity complex that associates with, but is distinct from, the postsynaptic density. Interacts with SNTB2.</text>
</comment>
<comment type="interaction">
    <interactant intactId="EBI-3385920">
        <id>Q9Y2H9</id>
    </interactant>
    <interactant intactId="EBI-297353">
        <id>P00533</id>
        <label>EGFR</label>
    </interactant>
    <organismsDiffer>false</organismsDiffer>
    <experiments>3</experiments>
</comment>
<comment type="subcellular location">
    <subcellularLocation>
        <location evidence="3">Cell membrane</location>
        <topology evidence="3">Peripheral membrane protein</topology>
        <orientation evidence="3">Cytoplasmic side</orientation>
    </subcellularLocation>
    <subcellularLocation>
        <location evidence="3">Cytoplasm</location>
        <location evidence="3">Cytoskeleton</location>
    </subcellularLocation>
    <subcellularLocation>
        <location evidence="3">Cell projection</location>
        <location evidence="3">Axon</location>
    </subcellularLocation>
    <subcellularLocation>
        <location evidence="3">Cell projection</location>
        <location evidence="3">Dendrite</location>
    </subcellularLocation>
    <text evidence="3">Also localized in the soma of neurons. Observed as punctate clusters in the processes of interneurons and along the cell body periphery. Colocalizes with syntrophins at the cell membrane.</text>
</comment>
<comment type="tissue specificity">
    <text evidence="10">Expressed in fetal brain.</text>
</comment>
<comment type="disease" evidence="10">
    <disease id="DI-05456">
        <name>Mega-corpus-callosum syndrome with cerebellar hypoplasia and cortical malformations</name>
        <acronym>MCCCHCM</acronym>
        <description>An autosomal dominant neurodevelopmental disorder with onset in infancy. MCCCHCM is characterized by global developmental delay, impaired intellectual development, poor or absent speech, unsteady gait, ataxia, inability to walk, and variable brain abnormalities. Seizures and autistic features are observed in some patients. Brain imaging findings include an enlarged corpus callosum in the absence of megalencephaly, cerebellar hypoplasia, ventricular dilation, gyral abnormalities, and cortical malformations.</description>
        <dbReference type="MIM" id="618273"/>
    </disease>
    <text>The disease is caused by variants affecting the gene represented in this entry.</text>
</comment>
<comment type="similarity">
    <text evidence="11">Belongs to the protein kinase superfamily. AGC Ser/Thr protein kinase family.</text>
</comment>
<comment type="sequence caution" evidence="11">
    <conflict type="erroneous gene model prediction">
        <sequence resource="EMBL-CDS" id="AAB51171"/>
    </conflict>
</comment>
<comment type="sequence caution" evidence="11">
    <conflict type="erroneous initiation">
        <sequence resource="EMBL-CDS" id="AAH27985"/>
    </conflict>
</comment>
<comment type="sequence caution" evidence="11">
    <conflict type="erroneous initiation">
        <sequence resource="EMBL-CDS" id="BAA76817"/>
    </conflict>
</comment>
<sequence length="1570" mass="170677">MSDSLWTALSNFSMPSFPGGSMFRRTKSCRTSNRKSLILTSTSPTLPRPHSPLPGHLGSSPLDSPRNFSPNTPAHFSFASSRRADGRRWSLASLPSSGYGTNTPSSTVSSSCSSQERLHQLPYQPTVDELHFLSKHFGSTESITDEDGGRRSPAVRPRSRSLSPGRSPSSYDNEIVMMNHVYKERFPKATAQMEEKLRDFTRAYEPDSVLPLADGVLSFIHHQIIELARDCLTKSRDGLITTVYFYELQENLEKLLQDAYERSESLEVAFVTQLVKKLLIIISRPARLLECLEFNPEEFYHLLEAAEGHAKEGHLVKTDIPRYIIRQLGLTRDPFPDVVHLEEQDSGGSNTPEQDDLSEGRSSKAKKPPGENDFDTIKLISNGAYGAVYLVRHRDTRQRFAMKKINKQNLILRNQIQQAFVERDILTFAENPFVVGMFCSFETRRHLCMVMEYVEGGDCATLLKNIGALPVEMARMYFAETVLALEYLHNYGIVHRDLKPDNLLITSMGHIKLTDFGLSKMGLMSLTTNLYEGHIEKDAREFLDKQVCGTPEYIAPEVILRQGYGKPVDWWAMGIILYEFLVGCVPFFGDTPEELFGQVISDDILWPEGDEALPTEAQLLISSLLQTNPLVRLGAGGAFEVKQHSFFRDLDWTGLLRQKAEFIPHLESEDDTSYFDTRSDRYHHVNSYDEDDTTEEEPVEIRQFSSCSPRFSKVYSSMEQLSQHEPKTPVAAAGSSKREPSTKGPEEKVAGKREGLGGLTLREKTWRGGSPEIKRFSASEASFLEGEASPPLGARRRFSALLEPSRFSAPQEDEDEARLRRPPRPSSDPAGSLDARAPKEETQGEGTSSAGDSEATDRPRPGDLCPPSKDGDASGPRATNDLVLRRARHQQMSGDVAVEKRPSRTGGKVIKSASATALSVMIPAVDPHGSSPLASPMSPRSLSSNPSSRDSSPSRDYSPAVSGLRSPITIQRSGKKYGFTLRAIRVYMGDTDVYSVHHIVWHVEEGGPAQEAGLCAGDLITHVNGEPVHGMVHPEVVELILKSGNKVAVTTTPFENTSIRIGPARRSSYKAKMARRNKRPSAKEGQESKKRSSLFRKITKQSNLLHTSRSLSSLNRSLSSSDSLPGSPTHGLPARSPTHSYRSTPDSAYLGASSQSSSPASSTPNSPASSASHHIRPSTLHGLSPKLHRQYRSARCKSAGNIPLSPLAHTPSPTQASPPPLPGHTVGSSHTTQSFPAKLHSSPPVVRPRPKSAEPPRSPLLKRVQSAEKLGASLSADKKGALRKHSLEVGHPDFRKDFHGELALHSLAESDGETPPVEGLGAPRQVAVRRLGRQESPLSLGADPLLPEGASRPPVSSKEKESPGGAEACTPPRATTPGGRTLERDVGCTRHQSVQTEDGTGGMARAVAKAALSPVQEHETGRRSSSGEAGTPLVPIVVEPARPGAKAVVPQPLGADSKGLQEPAPLAPSVPEAPRGRERWVLEVVEERTTLSGPRSKPASPKLSPEPQTPSLAPAKCSAPSSAVTPVPPASLLGSGTKPQVGLTSRCPAEAVPPAGLTKKGVSSPAPPGP</sequence>
<feature type="chain" id="PRO_0000086309" description="Microtubule-associated serine/threonine-protein kinase 1">
    <location>
        <begin position="1"/>
        <end position="1570"/>
    </location>
</feature>
<feature type="domain" description="Protein kinase" evidence="5">
    <location>
        <begin position="374"/>
        <end position="647"/>
    </location>
</feature>
<feature type="domain" description="AGC-kinase C-terminal" evidence="6">
    <location>
        <begin position="648"/>
        <end position="719"/>
    </location>
</feature>
<feature type="domain" description="PDZ" evidence="4">
    <location>
        <begin position="967"/>
        <end position="1055"/>
    </location>
</feature>
<feature type="region of interest" description="Disordered" evidence="8">
    <location>
        <begin position="23"/>
        <end position="80"/>
    </location>
</feature>
<feature type="region of interest" description="Disordered" evidence="8">
    <location>
        <begin position="94"/>
        <end position="117"/>
    </location>
</feature>
<feature type="region of interest" description="Disordered" evidence="8">
    <location>
        <begin position="139"/>
        <end position="171"/>
    </location>
</feature>
<feature type="region of interest" description="Disordered" evidence="8">
    <location>
        <begin position="340"/>
        <end position="374"/>
    </location>
</feature>
<feature type="region of interest" description="Disordered" evidence="8">
    <location>
        <begin position="717"/>
        <end position="909"/>
    </location>
</feature>
<feature type="region of interest" description="Disordered" evidence="8">
    <location>
        <begin position="929"/>
        <end position="965"/>
    </location>
</feature>
<feature type="region of interest" description="Disordered" evidence="8">
    <location>
        <begin position="1065"/>
        <end position="1184"/>
    </location>
</feature>
<feature type="region of interest" description="Disordered" evidence="8">
    <location>
        <begin position="1200"/>
        <end position="1293"/>
    </location>
</feature>
<feature type="region of interest" description="Disordered" evidence="8">
    <location>
        <begin position="1305"/>
        <end position="1570"/>
    </location>
</feature>
<feature type="compositionally biased region" description="Polar residues" evidence="8">
    <location>
        <begin position="29"/>
        <end position="45"/>
    </location>
</feature>
<feature type="compositionally biased region" description="Polar residues" evidence="8">
    <location>
        <begin position="66"/>
        <end position="80"/>
    </location>
</feature>
<feature type="compositionally biased region" description="Polar residues" evidence="8">
    <location>
        <begin position="94"/>
        <end position="104"/>
    </location>
</feature>
<feature type="compositionally biased region" description="Low complexity" evidence="8">
    <location>
        <begin position="105"/>
        <end position="114"/>
    </location>
</feature>
<feature type="compositionally biased region" description="Low complexity" evidence="8">
    <location>
        <begin position="151"/>
        <end position="170"/>
    </location>
</feature>
<feature type="compositionally biased region" description="Basic and acidic residues" evidence="8">
    <location>
        <begin position="736"/>
        <end position="777"/>
    </location>
</feature>
<feature type="compositionally biased region" description="Low complexity" evidence="8">
    <location>
        <begin position="930"/>
        <end position="959"/>
    </location>
</feature>
<feature type="compositionally biased region" description="Basic residues" evidence="8">
    <location>
        <begin position="1067"/>
        <end position="1080"/>
    </location>
</feature>
<feature type="compositionally biased region" description="Basic and acidic residues" evidence="8">
    <location>
        <begin position="1081"/>
        <end position="1090"/>
    </location>
</feature>
<feature type="compositionally biased region" description="Low complexity" evidence="8">
    <location>
        <begin position="1102"/>
        <end position="1130"/>
    </location>
</feature>
<feature type="compositionally biased region" description="Polar residues" evidence="8">
    <location>
        <begin position="1137"/>
        <end position="1146"/>
    </location>
</feature>
<feature type="compositionally biased region" description="Low complexity" evidence="8">
    <location>
        <begin position="1147"/>
        <end position="1172"/>
    </location>
</feature>
<feature type="compositionally biased region" description="Polar residues" evidence="8">
    <location>
        <begin position="1226"/>
        <end position="1235"/>
    </location>
</feature>
<feature type="compositionally biased region" description="Basic and acidic residues" evidence="8">
    <location>
        <begin position="1276"/>
        <end position="1293"/>
    </location>
</feature>
<feature type="compositionally biased region" description="Low complexity" evidence="8">
    <location>
        <begin position="1370"/>
        <end position="1380"/>
    </location>
</feature>
<feature type="compositionally biased region" description="Basic and acidic residues" evidence="8">
    <location>
        <begin position="1474"/>
        <end position="1489"/>
    </location>
</feature>
<feature type="active site" description="Proton acceptor" evidence="2 5 7">
    <location>
        <position position="497"/>
    </location>
</feature>
<feature type="binding site" evidence="2 5">
    <location>
        <begin position="380"/>
        <end position="388"/>
    </location>
    <ligand>
        <name>ATP</name>
        <dbReference type="ChEBI" id="CHEBI:30616"/>
    </ligand>
</feature>
<feature type="binding site" evidence="2 5">
    <location>
        <position position="403"/>
    </location>
    <ligand>
        <name>ATP</name>
        <dbReference type="ChEBI" id="CHEBI:30616"/>
    </ligand>
</feature>
<feature type="modified residue" description="Phosphoserine" evidence="3">
    <location>
        <position position="90"/>
    </location>
</feature>
<feature type="modified residue" description="Phosphoserine" evidence="3">
    <location>
        <position position="139"/>
    </location>
</feature>
<feature type="modified residue" description="Phosphoserine" evidence="3">
    <location>
        <position position="167"/>
    </location>
</feature>
<feature type="modified residue" description="Phosphoserine" evidence="1">
    <location>
        <position position="346"/>
    </location>
</feature>
<feature type="modified residue" description="Phosphothreonine" evidence="1">
    <location>
        <position position="351"/>
    </location>
</feature>
<feature type="modified residue" description="Phosphoserine" evidence="1">
    <location>
        <position position="687"/>
    </location>
</feature>
<feature type="modified residue" description="Phosphoserine" evidence="3">
    <location>
        <position position="893"/>
    </location>
</feature>
<feature type="modified residue" description="Phosphoserine" evidence="1">
    <location>
        <position position="952"/>
    </location>
</feature>
<feature type="modified residue" description="Phosphoserine" evidence="1">
    <location>
        <position position="1413"/>
    </location>
</feature>
<feature type="sequence variant" id="VAR_081872" description="In a patient with neurodevelopmental abnormalities; uncertain significance; dbSNP:rs878853165." evidence="10">
    <original>S</original>
    <variation>L</variation>
    <location>
        <position position="93"/>
    </location>
</feature>
<feature type="sequence variant" id="VAR_081873" description="In a patient with neurodevelopmental abnormalities; uncertain significance." evidence="10">
    <original>G</original>
    <variation>V</variation>
    <location>
        <position position="98"/>
    </location>
</feature>
<feature type="sequence variant" id="VAR_081874" description="In MCCCHCM; uncertain significance; dbSNP:rs1568408280." evidence="10">
    <location>
        <position position="195"/>
    </location>
</feature>
<feature type="sequence variant" id="VAR_040768" description="In a metastatic melanoma sample; somatic mutation." evidence="9">
    <original>A</original>
    <variation>T</variation>
    <location>
        <position position="269"/>
    </location>
</feature>
<feature type="sequence variant" id="VAR_081875" description="In MCCCHCM; dbSNP:rs1568409494." evidence="10">
    <location>
        <position position="277"/>
    </location>
</feature>
<feature type="sequence variant" id="VAR_081876" description="In MCCCHCM; expression of this variant in transgenic mice results in thicker corpus callosum, hypoplastic cortex and hypoplastic cerebellum." evidence="10">
    <location>
        <position position="279"/>
    </location>
</feature>
<feature type="sequence variant" id="VAR_081877" description="In MCCCHCM; dbSNP:rs1568413207." evidence="10">
    <original>G</original>
    <variation>S</variation>
    <location>
        <position position="517"/>
    </location>
</feature>
<feature type="sequence variant" id="VAR_081878" description="In a patient with neurodevelopmental abnormalities; uncertain significance." evidence="10">
    <original>A</original>
    <variation>T</variation>
    <location>
        <position position="915"/>
    </location>
</feature>
<feature type="sequence variant" id="VAR_051644" description="In dbSNP:rs35052801.">
    <original>A</original>
    <variation>S</variation>
    <location>
        <position position="1048"/>
    </location>
</feature>
<feature type="sequence variant" id="VAR_081879" description="In a patient with neurodevelopmental abnormalities; uncertain significance." evidence="10">
    <original>P</original>
    <variation>R</variation>
    <location>
        <position position="1177"/>
    </location>
</feature>
<feature type="sequence variant" id="VAR_040769" description="In an ovarian serous carcinoma sample; somatic mutation; dbSNP:rs1411105125." evidence="9">
    <original>H</original>
    <variation>Y</variation>
    <location>
        <position position="1240"/>
    </location>
</feature>
<feature type="sequence variant" id="VAR_040770" description="In dbSNP:rs35071862." evidence="9">
    <original>P</original>
    <variation>S</variation>
    <location>
        <position position="1292"/>
    </location>
</feature>
<feature type="helix" evidence="15">
    <location>
        <begin position="189"/>
        <end position="202"/>
    </location>
</feature>
<feature type="helix" evidence="15">
    <location>
        <begin position="216"/>
        <end position="237"/>
    </location>
</feature>
<feature type="helix" evidence="15">
    <location>
        <begin position="242"/>
        <end position="261"/>
    </location>
</feature>
<feature type="helix" evidence="15">
    <location>
        <begin position="268"/>
        <end position="281"/>
    </location>
</feature>
<feature type="strand" evidence="16">
    <location>
        <begin position="968"/>
        <end position="971"/>
    </location>
</feature>
<feature type="strand" evidence="16">
    <location>
        <begin position="973"/>
        <end position="975"/>
    </location>
</feature>
<feature type="strand" evidence="16">
    <location>
        <begin position="978"/>
        <end position="987"/>
    </location>
</feature>
<feature type="strand" evidence="16">
    <location>
        <begin position="994"/>
        <end position="1003"/>
    </location>
</feature>
<feature type="helix" evidence="16">
    <location>
        <begin position="1008"/>
        <end position="1012"/>
    </location>
</feature>
<feature type="strand" evidence="16">
    <location>
        <begin position="1019"/>
        <end position="1023"/>
    </location>
</feature>
<feature type="helix" evidence="16">
    <location>
        <begin position="1033"/>
        <end position="1042"/>
    </location>
</feature>
<feature type="turn" evidence="16">
    <location>
        <begin position="1043"/>
        <end position="1045"/>
    </location>
</feature>
<feature type="strand" evidence="16">
    <location>
        <begin position="1046"/>
        <end position="1052"/>
    </location>
</feature>
<organism>
    <name type="scientific">Homo sapiens</name>
    <name type="common">Human</name>
    <dbReference type="NCBI Taxonomy" id="9606"/>
    <lineage>
        <taxon>Eukaryota</taxon>
        <taxon>Metazoa</taxon>
        <taxon>Chordata</taxon>
        <taxon>Craniata</taxon>
        <taxon>Vertebrata</taxon>
        <taxon>Euteleostomi</taxon>
        <taxon>Mammalia</taxon>
        <taxon>Eutheria</taxon>
        <taxon>Euarchontoglires</taxon>
        <taxon>Primates</taxon>
        <taxon>Haplorrhini</taxon>
        <taxon>Catarrhini</taxon>
        <taxon>Hominidae</taxon>
        <taxon>Homo</taxon>
    </lineage>
</organism>